<comment type="function">
    <text evidence="1">Acts specifically as a negative regulator of skeletal muscle growth.</text>
</comment>
<comment type="subunit">
    <text evidence="1">Homodimer; disulfide-linked. Interacts with WFIKKN2, leading to inhibit its activity. Interacts with FSTL3.</text>
</comment>
<comment type="subcellular location">
    <subcellularLocation>
        <location evidence="1">Secreted</location>
    </subcellularLocation>
</comment>
<comment type="PTM">
    <text evidence="1">Synthesized as large precursor molecule that undergoes proteolytic cleavage to generate an N-terminal propeptide and a disulfide linked C-terminal dimer, which is the biologically active molecule. The circulating form consists of a latent complex of the C-terminal dimer and other proteins, including its propeptide, which maintain the C-terminal dimer in a latent, inactive state. Ligand activation requires additional cleavage of the prodomain by a tolloid-like metalloproteinase.</text>
</comment>
<comment type="similarity">
    <text evidence="4">Belongs to the TGF-beta family.</text>
</comment>
<proteinExistence type="evidence at transcript level"/>
<protein>
    <recommendedName>
        <fullName>Growth/differentiation factor 8</fullName>
        <shortName>GDF-8</shortName>
    </recommendedName>
    <alternativeName>
        <fullName>Myostatin</fullName>
    </alternativeName>
</protein>
<sequence>MQKLQIFVYIYLFMLLVAGPVDLNENSEQKENVEKKGLCNACLWRQSNKSSRLEAIKIQILSKLRLETAPNISKDAIRQLLPKAPPLRELIDQYDVQRDDSSDGSLEDDDYHVTTETVITMPTESDLLAEVQEKPKCCFFKFSSKIQHNKVVKAQLWIYLRPVKTPTTVFVQILRLIKPMKDGTRYTGIRSLKLDMNPGTGIWQSIDVKTVLQNWLKQPESNLGIEIKALDENGHDLAVTFPEPGEEGLNPFLEVKVTDTPKRSRRDFGLDCDEHSTESRCCRYPLTVDFEAFGWDWIIAPKRYKANYCSGECEFLFLQKYPHTHLVHQANPKGSAGPCCTPTKMSPINMLYFNGKEQIIYGKIPGMVVDRCGCS</sequence>
<evidence type="ECO:0000250" key="1">
    <source>
        <dbReference type="UniProtKB" id="O08689"/>
    </source>
</evidence>
<evidence type="ECO:0000250" key="2">
    <source>
        <dbReference type="UniProtKB" id="O14793"/>
    </source>
</evidence>
<evidence type="ECO:0000255" key="3"/>
<evidence type="ECO:0000305" key="4"/>
<dbReference type="EMBL" id="AY629305">
    <property type="protein sequence ID" value="AAT40569.1"/>
    <property type="molecule type" value="mRNA"/>
</dbReference>
<dbReference type="SMR" id="Q5USV9"/>
<dbReference type="GlyCosmos" id="Q5USV9">
    <property type="glycosylation" value="2 sites, No reported glycans"/>
</dbReference>
<dbReference type="GO" id="GO:0005615">
    <property type="term" value="C:extracellular space"/>
    <property type="evidence" value="ECO:0007669"/>
    <property type="project" value="UniProtKB-KW"/>
</dbReference>
<dbReference type="GO" id="GO:0005125">
    <property type="term" value="F:cytokine activity"/>
    <property type="evidence" value="ECO:0007669"/>
    <property type="project" value="UniProtKB-KW"/>
</dbReference>
<dbReference type="GO" id="GO:0008083">
    <property type="term" value="F:growth factor activity"/>
    <property type="evidence" value="ECO:0007669"/>
    <property type="project" value="UniProtKB-KW"/>
</dbReference>
<dbReference type="GO" id="GO:0008201">
    <property type="term" value="F:heparin binding"/>
    <property type="evidence" value="ECO:0007669"/>
    <property type="project" value="UniProtKB-KW"/>
</dbReference>
<dbReference type="GO" id="GO:0042802">
    <property type="term" value="F:identical protein binding"/>
    <property type="evidence" value="ECO:0000250"/>
    <property type="project" value="UniProtKB"/>
</dbReference>
<dbReference type="GO" id="GO:0014839">
    <property type="term" value="P:myoblast migration involved in skeletal muscle regeneration"/>
    <property type="evidence" value="ECO:0000250"/>
    <property type="project" value="UniProtKB"/>
</dbReference>
<dbReference type="GO" id="GO:0010592">
    <property type="term" value="P:positive regulation of lamellipodium assembly"/>
    <property type="evidence" value="ECO:0000250"/>
    <property type="project" value="UniProtKB"/>
</dbReference>
<dbReference type="GO" id="GO:0010759">
    <property type="term" value="P:positive regulation of macrophage chemotaxis"/>
    <property type="evidence" value="ECO:0000250"/>
    <property type="project" value="UniProtKB"/>
</dbReference>
<dbReference type="CDD" id="cd19388">
    <property type="entry name" value="TGF_beta_GDF8"/>
    <property type="match status" value="1"/>
</dbReference>
<dbReference type="FunFam" id="2.60.120.970:FF:000001">
    <property type="entry name" value="Growth/differentiation factor 8"/>
    <property type="match status" value="1"/>
</dbReference>
<dbReference type="FunFam" id="2.10.90.10:FF:000006">
    <property type="entry name" value="growth/differentiation factor 8"/>
    <property type="match status" value="1"/>
</dbReference>
<dbReference type="Gene3D" id="2.60.120.970">
    <property type="match status" value="1"/>
</dbReference>
<dbReference type="Gene3D" id="2.10.90.10">
    <property type="entry name" value="Cystine-knot cytokines"/>
    <property type="match status" value="1"/>
</dbReference>
<dbReference type="InterPro" id="IPR029034">
    <property type="entry name" value="Cystine-knot_cytokine"/>
</dbReference>
<dbReference type="InterPro" id="IPR001839">
    <property type="entry name" value="TGF-b_C"/>
</dbReference>
<dbReference type="InterPro" id="IPR001111">
    <property type="entry name" value="TGF-b_propeptide"/>
</dbReference>
<dbReference type="InterPro" id="IPR015615">
    <property type="entry name" value="TGF-beta-rel"/>
</dbReference>
<dbReference type="InterPro" id="IPR017948">
    <property type="entry name" value="TGFb_CS"/>
</dbReference>
<dbReference type="PANTHER" id="PTHR11848:SF150">
    <property type="entry name" value="GROWTH_DIFFERENTIATION FACTOR 8"/>
    <property type="match status" value="1"/>
</dbReference>
<dbReference type="PANTHER" id="PTHR11848">
    <property type="entry name" value="TGF-BETA FAMILY"/>
    <property type="match status" value="1"/>
</dbReference>
<dbReference type="Pfam" id="PF00019">
    <property type="entry name" value="TGF_beta"/>
    <property type="match status" value="1"/>
</dbReference>
<dbReference type="Pfam" id="PF00688">
    <property type="entry name" value="TGFb_propeptide"/>
    <property type="match status" value="1"/>
</dbReference>
<dbReference type="SMART" id="SM00204">
    <property type="entry name" value="TGFB"/>
    <property type="match status" value="1"/>
</dbReference>
<dbReference type="SUPFAM" id="SSF57501">
    <property type="entry name" value="Cystine-knot cytokines"/>
    <property type="match status" value="1"/>
</dbReference>
<dbReference type="PROSITE" id="PS00250">
    <property type="entry name" value="TGF_BETA_1"/>
    <property type="match status" value="1"/>
</dbReference>
<dbReference type="PROSITE" id="PS51362">
    <property type="entry name" value="TGF_BETA_2"/>
    <property type="match status" value="1"/>
</dbReference>
<gene>
    <name type="primary">MSTN</name>
    <name type="synonym">GDF8</name>
</gene>
<organism>
    <name type="scientific">Capra ibex</name>
    <name type="common">Ibex</name>
    <dbReference type="NCBI Taxonomy" id="72542"/>
    <lineage>
        <taxon>Eukaryota</taxon>
        <taxon>Metazoa</taxon>
        <taxon>Chordata</taxon>
        <taxon>Craniata</taxon>
        <taxon>Vertebrata</taxon>
        <taxon>Euteleostomi</taxon>
        <taxon>Mammalia</taxon>
        <taxon>Eutheria</taxon>
        <taxon>Laurasiatheria</taxon>
        <taxon>Artiodactyla</taxon>
        <taxon>Ruminantia</taxon>
        <taxon>Pecora</taxon>
        <taxon>Bovidae</taxon>
        <taxon>Caprinae</taxon>
        <taxon>Capra</taxon>
    </lineage>
</organism>
<keyword id="KW-0165">Cleavage on pair of basic residues</keyword>
<keyword id="KW-0202">Cytokine</keyword>
<keyword id="KW-1015">Disulfide bond</keyword>
<keyword id="KW-0325">Glycoprotein</keyword>
<keyword id="KW-0339">Growth factor</keyword>
<keyword id="KW-0358">Heparin-binding</keyword>
<keyword id="KW-0964">Secreted</keyword>
<keyword id="KW-0732">Signal</keyword>
<name>GDF8_CAPIB</name>
<feature type="signal peptide" evidence="3">
    <location>
        <begin position="1"/>
        <end position="18"/>
    </location>
</feature>
<feature type="propeptide" id="PRO_0000033942" evidence="3">
    <location>
        <begin position="19"/>
        <end position="266"/>
    </location>
</feature>
<feature type="chain" id="PRO_0000033943" description="Growth/differentiation factor 8">
    <location>
        <begin position="267"/>
        <end position="375"/>
    </location>
</feature>
<feature type="site" description="Cleavage" evidence="1">
    <location>
        <begin position="98"/>
        <end position="99"/>
    </location>
</feature>
<feature type="glycosylation site" description="N-linked (GlcNAc...) asparagine" evidence="3">
    <location>
        <position position="48"/>
    </location>
</feature>
<feature type="glycosylation site" description="N-linked (GlcNAc...) asparagine" evidence="3">
    <location>
        <position position="71"/>
    </location>
</feature>
<feature type="disulfide bond" evidence="2">
    <location>
        <begin position="272"/>
        <end position="282"/>
    </location>
</feature>
<feature type="disulfide bond" evidence="2">
    <location>
        <begin position="281"/>
        <end position="340"/>
    </location>
</feature>
<feature type="disulfide bond" evidence="2">
    <location>
        <begin position="309"/>
        <end position="372"/>
    </location>
</feature>
<feature type="disulfide bond" evidence="2">
    <location>
        <begin position="313"/>
        <end position="374"/>
    </location>
</feature>
<feature type="disulfide bond" description="Interchain" evidence="2">
    <location>
        <position position="339"/>
    </location>
</feature>
<accession>Q5USV9</accession>
<reference key="1">
    <citation type="journal article" date="2004" name="Mol. Phylogenet. Evol.">
        <title>Myostatin rapid sequence evolution in ruminants predates domestication.</title>
        <authorList>
            <person name="Tellgren S."/>
            <person name="Berglund A.C."/>
            <person name="Savolainen P."/>
            <person name="Janis C.M."/>
            <person name="Liberles D.A."/>
        </authorList>
    </citation>
    <scope>NUCLEOTIDE SEQUENCE [MRNA]</scope>
</reference>